<evidence type="ECO:0000255" key="1">
    <source>
        <dbReference type="PROSITE-ProRule" id="PRU00238"/>
    </source>
</evidence>
<gene>
    <name type="primary">HBAA</name>
</gene>
<protein>
    <recommendedName>
        <fullName>Hemoglobin subunit alpha-A</fullName>
    </recommendedName>
    <alternativeName>
        <fullName>Alpha-A-globin</fullName>
    </alternativeName>
    <alternativeName>
        <fullName>Hemoglobin alpha-A chain</fullName>
    </alternativeName>
</protein>
<feature type="chain" id="PRO_0000052600" description="Hemoglobin subunit alpha-A">
    <location>
        <begin position="1"/>
        <end position="141"/>
    </location>
</feature>
<feature type="domain" description="Globin" evidence="1">
    <location>
        <begin position="1"/>
        <end position="141"/>
    </location>
</feature>
<feature type="binding site" evidence="1">
    <location>
        <position position="58"/>
    </location>
    <ligand>
        <name>O2</name>
        <dbReference type="ChEBI" id="CHEBI:15379"/>
    </ligand>
</feature>
<feature type="binding site" description="proximal binding residue" evidence="1">
    <location>
        <position position="87"/>
    </location>
    <ligand>
        <name>heme b</name>
        <dbReference type="ChEBI" id="CHEBI:60344"/>
    </ligand>
    <ligandPart>
        <name>Fe</name>
        <dbReference type="ChEBI" id="CHEBI:18248"/>
    </ligandPart>
</feature>
<name>HBA_CHLME</name>
<organism>
    <name type="scientific">Chloephaga melanoptera</name>
    <name type="common">Andean goose</name>
    <name type="synonym">Anser melanopterus</name>
    <dbReference type="NCBI Taxonomy" id="8860"/>
    <lineage>
        <taxon>Eukaryota</taxon>
        <taxon>Metazoa</taxon>
        <taxon>Chordata</taxon>
        <taxon>Craniata</taxon>
        <taxon>Vertebrata</taxon>
        <taxon>Euteleostomi</taxon>
        <taxon>Archelosauria</taxon>
        <taxon>Archosauria</taxon>
        <taxon>Dinosauria</taxon>
        <taxon>Saurischia</taxon>
        <taxon>Theropoda</taxon>
        <taxon>Coelurosauria</taxon>
        <taxon>Aves</taxon>
        <taxon>Neognathae</taxon>
        <taxon>Galloanserae</taxon>
        <taxon>Anseriformes</taxon>
        <taxon>Anatidae</taxon>
        <taxon>Tadorninae</taxon>
        <taxon>Chloephaga</taxon>
    </lineage>
</organism>
<proteinExistence type="evidence at protein level"/>
<reference key="1">
    <citation type="journal article" date="1987" name="Biol. Chem. Hoppe-Seyler">
        <title>The primary structures of the major and minor hemoglobin-components of adult Andean goose (Chloephaga melanoptera, Anatidae): the mutation Leu--&gt;Ser in position 55 of the beta-chains.</title>
        <authorList>
            <person name="Hiebl I."/>
            <person name="Braunitzer G."/>
            <person name="Schneeganss D."/>
        </authorList>
    </citation>
    <scope>PROTEIN SEQUENCE</scope>
</reference>
<keyword id="KW-0903">Direct protein sequencing</keyword>
<keyword id="KW-0349">Heme</keyword>
<keyword id="KW-0408">Iron</keyword>
<keyword id="KW-0479">Metal-binding</keyword>
<keyword id="KW-0561">Oxygen transport</keyword>
<keyword id="KW-0813">Transport</keyword>
<dbReference type="PIR" id="S00568">
    <property type="entry name" value="HAGSAA"/>
</dbReference>
<dbReference type="SMR" id="P07034"/>
<dbReference type="GO" id="GO:0072562">
    <property type="term" value="C:blood microparticle"/>
    <property type="evidence" value="ECO:0007669"/>
    <property type="project" value="TreeGrafter"/>
</dbReference>
<dbReference type="GO" id="GO:0031838">
    <property type="term" value="C:haptoglobin-hemoglobin complex"/>
    <property type="evidence" value="ECO:0007669"/>
    <property type="project" value="TreeGrafter"/>
</dbReference>
<dbReference type="GO" id="GO:0005833">
    <property type="term" value="C:hemoglobin complex"/>
    <property type="evidence" value="ECO:0007669"/>
    <property type="project" value="InterPro"/>
</dbReference>
<dbReference type="GO" id="GO:0031720">
    <property type="term" value="F:haptoglobin binding"/>
    <property type="evidence" value="ECO:0007669"/>
    <property type="project" value="TreeGrafter"/>
</dbReference>
<dbReference type="GO" id="GO:0020037">
    <property type="term" value="F:heme binding"/>
    <property type="evidence" value="ECO:0007669"/>
    <property type="project" value="InterPro"/>
</dbReference>
<dbReference type="GO" id="GO:0005506">
    <property type="term" value="F:iron ion binding"/>
    <property type="evidence" value="ECO:0007669"/>
    <property type="project" value="InterPro"/>
</dbReference>
<dbReference type="GO" id="GO:0043177">
    <property type="term" value="F:organic acid binding"/>
    <property type="evidence" value="ECO:0007669"/>
    <property type="project" value="TreeGrafter"/>
</dbReference>
<dbReference type="GO" id="GO:0019825">
    <property type="term" value="F:oxygen binding"/>
    <property type="evidence" value="ECO:0007669"/>
    <property type="project" value="InterPro"/>
</dbReference>
<dbReference type="GO" id="GO:0005344">
    <property type="term" value="F:oxygen carrier activity"/>
    <property type="evidence" value="ECO:0007669"/>
    <property type="project" value="UniProtKB-KW"/>
</dbReference>
<dbReference type="GO" id="GO:0004601">
    <property type="term" value="F:peroxidase activity"/>
    <property type="evidence" value="ECO:0007669"/>
    <property type="project" value="TreeGrafter"/>
</dbReference>
<dbReference type="GO" id="GO:0042744">
    <property type="term" value="P:hydrogen peroxide catabolic process"/>
    <property type="evidence" value="ECO:0007669"/>
    <property type="project" value="TreeGrafter"/>
</dbReference>
<dbReference type="CDD" id="cd08927">
    <property type="entry name" value="Hb-alpha-like"/>
    <property type="match status" value="1"/>
</dbReference>
<dbReference type="FunFam" id="1.10.490.10:FF:000002">
    <property type="entry name" value="Hemoglobin subunit alpha"/>
    <property type="match status" value="1"/>
</dbReference>
<dbReference type="Gene3D" id="1.10.490.10">
    <property type="entry name" value="Globins"/>
    <property type="match status" value="1"/>
</dbReference>
<dbReference type="InterPro" id="IPR000971">
    <property type="entry name" value="Globin"/>
</dbReference>
<dbReference type="InterPro" id="IPR009050">
    <property type="entry name" value="Globin-like_sf"/>
</dbReference>
<dbReference type="InterPro" id="IPR012292">
    <property type="entry name" value="Globin/Proto"/>
</dbReference>
<dbReference type="InterPro" id="IPR002338">
    <property type="entry name" value="Hemoglobin_a-typ"/>
</dbReference>
<dbReference type="InterPro" id="IPR050056">
    <property type="entry name" value="Hemoglobin_oxygen_transport"/>
</dbReference>
<dbReference type="InterPro" id="IPR002339">
    <property type="entry name" value="Hemoglobin_pi"/>
</dbReference>
<dbReference type="PANTHER" id="PTHR11442">
    <property type="entry name" value="HEMOGLOBIN FAMILY MEMBER"/>
    <property type="match status" value="1"/>
</dbReference>
<dbReference type="PANTHER" id="PTHR11442:SF48">
    <property type="entry name" value="HEMOGLOBIN SUBUNIT ALPHA"/>
    <property type="match status" value="1"/>
</dbReference>
<dbReference type="Pfam" id="PF00042">
    <property type="entry name" value="Globin"/>
    <property type="match status" value="1"/>
</dbReference>
<dbReference type="PRINTS" id="PR00612">
    <property type="entry name" value="ALPHAHAEM"/>
</dbReference>
<dbReference type="PRINTS" id="PR00815">
    <property type="entry name" value="PIHAEM"/>
</dbReference>
<dbReference type="SUPFAM" id="SSF46458">
    <property type="entry name" value="Globin-like"/>
    <property type="match status" value="1"/>
</dbReference>
<dbReference type="PROSITE" id="PS01033">
    <property type="entry name" value="GLOBIN"/>
    <property type="match status" value="1"/>
</dbReference>
<accession>P07034</accession>
<sequence length="141" mass="15270">VLSAADKANVKGVFSKIGGHADDYGAETLERMFIAYPQTKTYFPHFDLHHGSAQIKAHGKKVAAALVEAVNHIDDITGALSKLSDLHAQKLRVDPVNFKFLGHCFLVVVAIHHPAALTPEVHASLDKFMCAVGAVLTAKYR</sequence>
<comment type="function">
    <text>Involved in oxygen transport from the lung to the various peripheral tissues.</text>
</comment>
<comment type="subunit">
    <text>Heterotetramer of two alpha chains and two beta chains.</text>
</comment>
<comment type="tissue specificity">
    <text>Red blood cells.</text>
</comment>
<comment type="similarity">
    <text evidence="1">Belongs to the globin family.</text>
</comment>